<proteinExistence type="inferred from homology"/>
<feature type="chain" id="PRO_0000266971" description="Probable GTP-binding protein EngB">
    <location>
        <begin position="1"/>
        <end position="233"/>
    </location>
</feature>
<feature type="domain" description="EngB-type G" evidence="1">
    <location>
        <begin position="21"/>
        <end position="228"/>
    </location>
</feature>
<feature type="region of interest" description="Disordered" evidence="2">
    <location>
        <begin position="68"/>
        <end position="87"/>
    </location>
</feature>
<feature type="compositionally biased region" description="Basic and acidic residues" evidence="2">
    <location>
        <begin position="72"/>
        <end position="85"/>
    </location>
</feature>
<feature type="binding site" evidence="1">
    <location>
        <begin position="29"/>
        <end position="36"/>
    </location>
    <ligand>
        <name>GTP</name>
        <dbReference type="ChEBI" id="CHEBI:37565"/>
    </ligand>
</feature>
<feature type="binding site" evidence="1">
    <location>
        <position position="36"/>
    </location>
    <ligand>
        <name>Mg(2+)</name>
        <dbReference type="ChEBI" id="CHEBI:18420"/>
    </ligand>
</feature>
<feature type="binding site" evidence="1">
    <location>
        <begin position="56"/>
        <end position="60"/>
    </location>
    <ligand>
        <name>GTP</name>
        <dbReference type="ChEBI" id="CHEBI:37565"/>
    </ligand>
</feature>
<feature type="binding site" evidence="1">
    <location>
        <position position="58"/>
    </location>
    <ligand>
        <name>Mg(2+)</name>
        <dbReference type="ChEBI" id="CHEBI:18420"/>
    </ligand>
</feature>
<feature type="binding site" evidence="1">
    <location>
        <begin position="107"/>
        <end position="110"/>
    </location>
    <ligand>
        <name>GTP</name>
        <dbReference type="ChEBI" id="CHEBI:37565"/>
    </ligand>
</feature>
<feature type="binding site" evidence="1">
    <location>
        <begin position="174"/>
        <end position="177"/>
    </location>
    <ligand>
        <name>GTP</name>
        <dbReference type="ChEBI" id="CHEBI:37565"/>
    </ligand>
</feature>
<feature type="binding site" evidence="1">
    <location>
        <begin position="207"/>
        <end position="209"/>
    </location>
    <ligand>
        <name>GTP</name>
        <dbReference type="ChEBI" id="CHEBI:37565"/>
    </ligand>
</feature>
<protein>
    <recommendedName>
        <fullName evidence="1">Probable GTP-binding protein EngB</fullName>
    </recommendedName>
</protein>
<gene>
    <name evidence="1" type="primary">engB</name>
    <name type="ordered locus">STH362</name>
</gene>
<sequence>MGVHAEFVLSAVAQGQFPQDGLPEVALVGRSNVGKSSLINALVRNRKLARTSNTPGRTQALNFYRVWPQGKPRPEGEPQPDKDAGRTALSGPVLQAARESGAFYLVDMPGYGFARVSEAQRREWARLIEGYLLTRGALRGVLQIVDLRHPPTRDDVTMREWIRHHRLPSLCVATKADKIGRTAWPRHRQVIARELGLDGDGEPLVLFSAETGLGRDDVWRWIREHVQDWTFDM</sequence>
<organism>
    <name type="scientific">Symbiobacterium thermophilum (strain DSM 24528 / JCM 14929 / IAM 14863 / T)</name>
    <dbReference type="NCBI Taxonomy" id="292459"/>
    <lineage>
        <taxon>Bacteria</taxon>
        <taxon>Bacillati</taxon>
        <taxon>Bacillota</taxon>
        <taxon>Clostridia</taxon>
        <taxon>Eubacteriales</taxon>
        <taxon>Symbiobacteriaceae</taxon>
        <taxon>Symbiobacterium</taxon>
    </lineage>
</organism>
<comment type="function">
    <text evidence="1">Necessary for normal cell division and for the maintenance of normal septation.</text>
</comment>
<comment type="cofactor">
    <cofactor evidence="1">
        <name>Mg(2+)</name>
        <dbReference type="ChEBI" id="CHEBI:18420"/>
    </cofactor>
</comment>
<comment type="similarity">
    <text evidence="1">Belongs to the TRAFAC class TrmE-Era-EngA-EngB-Septin-like GTPase superfamily. EngB GTPase family.</text>
</comment>
<name>ENGB_SYMTH</name>
<keyword id="KW-0131">Cell cycle</keyword>
<keyword id="KW-0132">Cell division</keyword>
<keyword id="KW-0342">GTP-binding</keyword>
<keyword id="KW-0460">Magnesium</keyword>
<keyword id="KW-0479">Metal-binding</keyword>
<keyword id="KW-0547">Nucleotide-binding</keyword>
<keyword id="KW-1185">Reference proteome</keyword>
<keyword id="KW-0717">Septation</keyword>
<dbReference type="EMBL" id="AP006840">
    <property type="protein sequence ID" value="BAD39347.1"/>
    <property type="molecule type" value="Genomic_DNA"/>
</dbReference>
<dbReference type="RefSeq" id="WP_011194496.1">
    <property type="nucleotide sequence ID" value="NC_006177.1"/>
</dbReference>
<dbReference type="SMR" id="Q67SJ6"/>
<dbReference type="STRING" id="292459.STH362"/>
<dbReference type="KEGG" id="sth:STH362"/>
<dbReference type="eggNOG" id="COG0218">
    <property type="taxonomic scope" value="Bacteria"/>
</dbReference>
<dbReference type="HOGENOM" id="CLU_033732_3_0_9"/>
<dbReference type="OrthoDB" id="9804921at2"/>
<dbReference type="Proteomes" id="UP000000417">
    <property type="component" value="Chromosome"/>
</dbReference>
<dbReference type="GO" id="GO:0005829">
    <property type="term" value="C:cytosol"/>
    <property type="evidence" value="ECO:0007669"/>
    <property type="project" value="TreeGrafter"/>
</dbReference>
<dbReference type="GO" id="GO:0005525">
    <property type="term" value="F:GTP binding"/>
    <property type="evidence" value="ECO:0007669"/>
    <property type="project" value="UniProtKB-UniRule"/>
</dbReference>
<dbReference type="GO" id="GO:0046872">
    <property type="term" value="F:metal ion binding"/>
    <property type="evidence" value="ECO:0007669"/>
    <property type="project" value="UniProtKB-KW"/>
</dbReference>
<dbReference type="GO" id="GO:0000917">
    <property type="term" value="P:division septum assembly"/>
    <property type="evidence" value="ECO:0007669"/>
    <property type="project" value="UniProtKB-KW"/>
</dbReference>
<dbReference type="CDD" id="cd01876">
    <property type="entry name" value="YihA_EngB"/>
    <property type="match status" value="1"/>
</dbReference>
<dbReference type="Gene3D" id="3.40.50.300">
    <property type="entry name" value="P-loop containing nucleotide triphosphate hydrolases"/>
    <property type="match status" value="1"/>
</dbReference>
<dbReference type="HAMAP" id="MF_00321">
    <property type="entry name" value="GTPase_EngB"/>
    <property type="match status" value="1"/>
</dbReference>
<dbReference type="InterPro" id="IPR030393">
    <property type="entry name" value="G_ENGB_dom"/>
</dbReference>
<dbReference type="InterPro" id="IPR006073">
    <property type="entry name" value="GTP-bd"/>
</dbReference>
<dbReference type="InterPro" id="IPR019987">
    <property type="entry name" value="GTP-bd_ribosome_bio_YsxC"/>
</dbReference>
<dbReference type="InterPro" id="IPR027417">
    <property type="entry name" value="P-loop_NTPase"/>
</dbReference>
<dbReference type="PANTHER" id="PTHR11649:SF13">
    <property type="entry name" value="ENGB-TYPE G DOMAIN-CONTAINING PROTEIN"/>
    <property type="match status" value="1"/>
</dbReference>
<dbReference type="PANTHER" id="PTHR11649">
    <property type="entry name" value="MSS1/TRME-RELATED GTP-BINDING PROTEIN"/>
    <property type="match status" value="1"/>
</dbReference>
<dbReference type="Pfam" id="PF01926">
    <property type="entry name" value="MMR_HSR1"/>
    <property type="match status" value="1"/>
</dbReference>
<dbReference type="SUPFAM" id="SSF52540">
    <property type="entry name" value="P-loop containing nucleoside triphosphate hydrolases"/>
    <property type="match status" value="1"/>
</dbReference>
<dbReference type="PROSITE" id="PS51706">
    <property type="entry name" value="G_ENGB"/>
    <property type="match status" value="1"/>
</dbReference>
<reference key="1">
    <citation type="journal article" date="2004" name="Nucleic Acids Res.">
        <title>Genome sequence of Symbiobacterium thermophilum, an uncultivable bacterium that depends on microbial commensalism.</title>
        <authorList>
            <person name="Ueda K."/>
            <person name="Yamashita A."/>
            <person name="Ishikawa J."/>
            <person name="Shimada M."/>
            <person name="Watsuji T."/>
            <person name="Morimura K."/>
            <person name="Ikeda H."/>
            <person name="Hattori M."/>
            <person name="Beppu T."/>
        </authorList>
    </citation>
    <scope>NUCLEOTIDE SEQUENCE [LARGE SCALE GENOMIC DNA]</scope>
    <source>
        <strain>DSM 24528 / JCM 14929 / IAM 14863 / T</strain>
    </source>
</reference>
<evidence type="ECO:0000255" key="1">
    <source>
        <dbReference type="HAMAP-Rule" id="MF_00321"/>
    </source>
</evidence>
<evidence type="ECO:0000256" key="2">
    <source>
        <dbReference type="SAM" id="MobiDB-lite"/>
    </source>
</evidence>
<accession>Q67SJ6</accession>